<protein>
    <recommendedName>
        <fullName evidence="1">Phospho-N-acetylmuramoyl-pentapeptide-transferase</fullName>
        <ecNumber evidence="1">2.7.8.13</ecNumber>
    </recommendedName>
    <alternativeName>
        <fullName evidence="1">UDP-MurNAc-pentapeptide phosphotransferase</fullName>
    </alternativeName>
</protein>
<name>MRAY_HELPH</name>
<keyword id="KW-0131">Cell cycle</keyword>
<keyword id="KW-0132">Cell division</keyword>
<keyword id="KW-0997">Cell inner membrane</keyword>
<keyword id="KW-1003">Cell membrane</keyword>
<keyword id="KW-0133">Cell shape</keyword>
<keyword id="KW-0961">Cell wall biogenesis/degradation</keyword>
<keyword id="KW-0460">Magnesium</keyword>
<keyword id="KW-0472">Membrane</keyword>
<keyword id="KW-0479">Metal-binding</keyword>
<keyword id="KW-0573">Peptidoglycan synthesis</keyword>
<keyword id="KW-0808">Transferase</keyword>
<keyword id="KW-0812">Transmembrane</keyword>
<keyword id="KW-1133">Transmembrane helix</keyword>
<dbReference type="EC" id="2.7.8.13" evidence="1"/>
<dbReference type="EMBL" id="CP000241">
    <property type="protein sequence ID" value="ABF84536.1"/>
    <property type="molecule type" value="Genomic_DNA"/>
</dbReference>
<dbReference type="RefSeq" id="WP_000967113.1">
    <property type="nucleotide sequence ID" value="NC_008086.1"/>
</dbReference>
<dbReference type="SMR" id="Q1CU36"/>
<dbReference type="KEGG" id="hpa:HPAG1_0469"/>
<dbReference type="HOGENOM" id="CLU_023982_0_0_7"/>
<dbReference type="UniPathway" id="UPA00219"/>
<dbReference type="GO" id="GO:0005886">
    <property type="term" value="C:plasma membrane"/>
    <property type="evidence" value="ECO:0007669"/>
    <property type="project" value="UniProtKB-SubCell"/>
</dbReference>
<dbReference type="GO" id="GO:0046872">
    <property type="term" value="F:metal ion binding"/>
    <property type="evidence" value="ECO:0007669"/>
    <property type="project" value="UniProtKB-KW"/>
</dbReference>
<dbReference type="GO" id="GO:0008963">
    <property type="term" value="F:phospho-N-acetylmuramoyl-pentapeptide-transferase activity"/>
    <property type="evidence" value="ECO:0007669"/>
    <property type="project" value="UniProtKB-UniRule"/>
</dbReference>
<dbReference type="GO" id="GO:0051992">
    <property type="term" value="F:UDP-N-acetylmuramoyl-L-alanyl-D-glutamyl-meso-2,6-diaminopimelyl-D-alanyl-D-alanine:undecaprenyl-phosphate transferase activity"/>
    <property type="evidence" value="ECO:0007669"/>
    <property type="project" value="RHEA"/>
</dbReference>
<dbReference type="GO" id="GO:0051301">
    <property type="term" value="P:cell division"/>
    <property type="evidence" value="ECO:0007669"/>
    <property type="project" value="UniProtKB-KW"/>
</dbReference>
<dbReference type="GO" id="GO:0071555">
    <property type="term" value="P:cell wall organization"/>
    <property type="evidence" value="ECO:0007669"/>
    <property type="project" value="UniProtKB-KW"/>
</dbReference>
<dbReference type="GO" id="GO:0009252">
    <property type="term" value="P:peptidoglycan biosynthetic process"/>
    <property type="evidence" value="ECO:0007669"/>
    <property type="project" value="UniProtKB-UniRule"/>
</dbReference>
<dbReference type="GO" id="GO:0008360">
    <property type="term" value="P:regulation of cell shape"/>
    <property type="evidence" value="ECO:0007669"/>
    <property type="project" value="UniProtKB-KW"/>
</dbReference>
<dbReference type="CDD" id="cd06852">
    <property type="entry name" value="GT_MraY"/>
    <property type="match status" value="1"/>
</dbReference>
<dbReference type="HAMAP" id="MF_00038">
    <property type="entry name" value="MraY"/>
    <property type="match status" value="1"/>
</dbReference>
<dbReference type="InterPro" id="IPR000715">
    <property type="entry name" value="Glycosyl_transferase_4"/>
</dbReference>
<dbReference type="InterPro" id="IPR003524">
    <property type="entry name" value="PNAcMuramoyl-5peptid_Trfase"/>
</dbReference>
<dbReference type="InterPro" id="IPR018480">
    <property type="entry name" value="PNAcMuramoyl-5peptid_Trfase_CS"/>
</dbReference>
<dbReference type="NCBIfam" id="TIGR00445">
    <property type="entry name" value="mraY"/>
    <property type="match status" value="1"/>
</dbReference>
<dbReference type="PANTHER" id="PTHR22926">
    <property type="entry name" value="PHOSPHO-N-ACETYLMURAMOYL-PENTAPEPTIDE-TRANSFERASE"/>
    <property type="match status" value="1"/>
</dbReference>
<dbReference type="PANTHER" id="PTHR22926:SF5">
    <property type="entry name" value="PHOSPHO-N-ACETYLMURAMOYL-PENTAPEPTIDE-TRANSFERASE HOMOLOG"/>
    <property type="match status" value="1"/>
</dbReference>
<dbReference type="Pfam" id="PF00953">
    <property type="entry name" value="Glycos_transf_4"/>
    <property type="match status" value="1"/>
</dbReference>
<dbReference type="Pfam" id="PF10555">
    <property type="entry name" value="MraY_sig1"/>
    <property type="match status" value="1"/>
</dbReference>
<dbReference type="PROSITE" id="PS01347">
    <property type="entry name" value="MRAY_1"/>
    <property type="match status" value="1"/>
</dbReference>
<dbReference type="PROSITE" id="PS01348">
    <property type="entry name" value="MRAY_2"/>
    <property type="match status" value="1"/>
</dbReference>
<feature type="chain" id="PRO_1000002989" description="Phospho-N-acetylmuramoyl-pentapeptide-transferase">
    <location>
        <begin position="1"/>
        <end position="353"/>
    </location>
</feature>
<feature type="transmembrane region" description="Helical" evidence="1">
    <location>
        <begin position="24"/>
        <end position="44"/>
    </location>
</feature>
<feature type="transmembrane region" description="Helical" evidence="1">
    <location>
        <begin position="66"/>
        <end position="86"/>
    </location>
</feature>
<feature type="transmembrane region" description="Helical" evidence="1">
    <location>
        <begin position="88"/>
        <end position="108"/>
    </location>
</feature>
<feature type="transmembrane region" description="Helical" evidence="1">
    <location>
        <begin position="129"/>
        <end position="149"/>
    </location>
</feature>
<feature type="transmembrane region" description="Helical" evidence="1">
    <location>
        <begin position="160"/>
        <end position="180"/>
    </location>
</feature>
<feature type="transmembrane region" description="Helical" evidence="1">
    <location>
        <begin position="192"/>
        <end position="212"/>
    </location>
</feature>
<feature type="transmembrane region" description="Helical" evidence="1">
    <location>
        <begin position="229"/>
        <end position="249"/>
    </location>
</feature>
<feature type="transmembrane region" description="Helical" evidence="1">
    <location>
        <begin position="256"/>
        <end position="276"/>
    </location>
</feature>
<feature type="transmembrane region" description="Helical" evidence="1">
    <location>
        <begin position="281"/>
        <end position="301"/>
    </location>
</feature>
<feature type="transmembrane region" description="Helical" evidence="1">
    <location>
        <begin position="330"/>
        <end position="350"/>
    </location>
</feature>
<comment type="function">
    <text evidence="1">Catalyzes the initial step of the lipid cycle reactions in the biosynthesis of the cell wall peptidoglycan: transfers peptidoglycan precursor phospho-MurNAc-pentapeptide from UDP-MurNAc-pentapeptide onto the lipid carrier undecaprenyl phosphate, yielding undecaprenyl-pyrophosphoryl-MurNAc-pentapeptide, known as lipid I.</text>
</comment>
<comment type="catalytic activity">
    <reaction evidence="1">
        <text>UDP-N-acetyl-alpha-D-muramoyl-L-alanyl-gamma-D-glutamyl-meso-2,6-diaminopimeloyl-D-alanyl-D-alanine + di-trans,octa-cis-undecaprenyl phosphate = di-trans,octa-cis-undecaprenyl diphospho-N-acetyl-alpha-D-muramoyl-L-alanyl-D-glutamyl-meso-2,6-diaminopimeloyl-D-alanyl-D-alanine + UMP</text>
        <dbReference type="Rhea" id="RHEA:28386"/>
        <dbReference type="ChEBI" id="CHEBI:57865"/>
        <dbReference type="ChEBI" id="CHEBI:60392"/>
        <dbReference type="ChEBI" id="CHEBI:61386"/>
        <dbReference type="ChEBI" id="CHEBI:61387"/>
        <dbReference type="EC" id="2.7.8.13"/>
    </reaction>
</comment>
<comment type="cofactor">
    <cofactor evidence="1">
        <name>Mg(2+)</name>
        <dbReference type="ChEBI" id="CHEBI:18420"/>
    </cofactor>
</comment>
<comment type="pathway">
    <text evidence="1">Cell wall biogenesis; peptidoglycan biosynthesis.</text>
</comment>
<comment type="subcellular location">
    <subcellularLocation>
        <location evidence="1">Cell inner membrane</location>
        <topology evidence="1">Multi-pass membrane protein</topology>
    </subcellularLocation>
</comment>
<comment type="similarity">
    <text evidence="1">Belongs to the glycosyltransferase 4 family. MraY subfamily.</text>
</comment>
<proteinExistence type="inferred from homology"/>
<reference key="1">
    <citation type="journal article" date="2006" name="Proc. Natl. Acad. Sci. U.S.A.">
        <title>The complete genome sequence of a chronic atrophic gastritis Helicobacter pylori strain: evolution during disease progression.</title>
        <authorList>
            <person name="Oh J.D."/>
            <person name="Kling-Baeckhed H."/>
            <person name="Giannakis M."/>
            <person name="Xu J."/>
            <person name="Fulton R.S."/>
            <person name="Fulton L.A."/>
            <person name="Cordum H.S."/>
            <person name="Wang C."/>
            <person name="Elliott G."/>
            <person name="Edwards J."/>
            <person name="Mardis E.R."/>
            <person name="Engstrand L.G."/>
            <person name="Gordon J.I."/>
        </authorList>
    </citation>
    <scope>NUCLEOTIDE SEQUENCE [LARGE SCALE GENOMIC DNA]</scope>
    <source>
        <strain>HPAG1</strain>
    </source>
</reference>
<sequence>MLYSLLYGYFNINLFQYLTFRAGLGFFIAFFLTLFLMPKFILWAKAKKANQPISSFVPSHQNKKDTPTMGGIVFVFATIVASVLCASLGNLYVLLGIIVLVGFSFVGFRDDYTKINQQNNAGMSAKMKFGMLFVLSLVVSVLLSLKGLDTFLYAPFLKNPLFEMPTMLAVGFWVLVFLSTSNAVNLTDGLDGLASVPSIFTLLSLSIFVYVAGNAEFSKYLLYPKVIDVGELFVVSLALVGSLFGFLWYNCNPASVFMGDSGSLALGGFIAYNAIVSHNEILLVLMGSIFVVETLSVILQVGSYKTRKKRLFLMAPIHHHFEQKGWAENKVIVRFWIISMLSNLVALLSLKVR</sequence>
<organism>
    <name type="scientific">Helicobacter pylori (strain HPAG1)</name>
    <dbReference type="NCBI Taxonomy" id="357544"/>
    <lineage>
        <taxon>Bacteria</taxon>
        <taxon>Pseudomonadati</taxon>
        <taxon>Campylobacterota</taxon>
        <taxon>Epsilonproteobacteria</taxon>
        <taxon>Campylobacterales</taxon>
        <taxon>Helicobacteraceae</taxon>
        <taxon>Helicobacter</taxon>
    </lineage>
</organism>
<evidence type="ECO:0000255" key="1">
    <source>
        <dbReference type="HAMAP-Rule" id="MF_00038"/>
    </source>
</evidence>
<accession>Q1CU36</accession>
<gene>
    <name evidence="1" type="primary">mraY</name>
    <name type="ordered locus">HPAG1_0469</name>
</gene>